<sequence length="518" mass="57670">MSFKVNWNTLETDSLREWTSQLLTDALNSGKRPPILASDIQIKDLNFGKVAPDFEILDIGELDSDRFRGIFKINYSGDFHLTLHTRVQANPLTIYQENSNASDAAFVTPNFLLASDPFALPLDLKLSDIRISGIGIIVFSRLKGLTLVFRNDPLDSIKVTSTFDTVQVLAKFLQNQIETQIRDLFRETLPTLIHRLSLKYLSSDDSSFLDDLRPQLAALHEETVSLMDIDPDVPYSPENLSRVSALFKSRETLRLAVPKIRHSVQRCRLEKFTKTQPSLVRCLHDNLNLDLVAAPQHTNEIPVELVSGADFSKTNHVLREISSIQASNYYRSSSSRPKRRVIKLGSKKSSVKSTPSAETLASPIPSEMSSATASEHVSPTKYYQNDSHISLYHPKPRQADGAAALQLANPQSYLYHNVSSTPQLPSNSSLLAGIGLGNNYFNFASQSQISTSPIRRSSQELEDKKVTGKKSINHLDIAQLNSKLNATLHTIPDVKSHPGTGRKLDTGFEMPPPPPYQV</sequence>
<proteinExistence type="inferred from homology"/>
<protein>
    <recommendedName>
        <fullName evidence="1">Mitochondrial distribution and morphology protein 34</fullName>
    </recommendedName>
</protein>
<organism>
    <name type="scientific">Meyerozyma guilliermondii (strain ATCC 6260 / CBS 566 / DSM 6381 / JCM 1539 / NBRC 10279 / NRRL Y-324)</name>
    <name type="common">Yeast</name>
    <name type="synonym">Candida guilliermondii</name>
    <dbReference type="NCBI Taxonomy" id="294746"/>
    <lineage>
        <taxon>Eukaryota</taxon>
        <taxon>Fungi</taxon>
        <taxon>Dikarya</taxon>
        <taxon>Ascomycota</taxon>
        <taxon>Saccharomycotina</taxon>
        <taxon>Pichiomycetes</taxon>
        <taxon>Debaryomycetaceae</taxon>
        <taxon>Meyerozyma</taxon>
    </lineage>
</organism>
<name>MDM34_PICGU</name>
<comment type="function">
    <text evidence="1">Component of the ERMES/MDM complex, which serves as a molecular tether to connect the endoplasmic reticulum (ER) and mitochondria. Components of this complex are involved in the control of mitochondrial shape and protein biogenesis, and function in nonvesicular lipid trafficking between the ER and mitochondria. MDM34 is required for the interaction of the ER-resident membrane protein MMM1 and the outer mitochondrial membrane-resident beta-barrel protein MDM10.</text>
</comment>
<comment type="subunit">
    <text evidence="1">Component of the ER-mitochondria encounter structure (ERMES) or MDM complex, composed of MMM1, MDM10, MDM12 and MDM34.</text>
</comment>
<comment type="subcellular location">
    <subcellularLocation>
        <location evidence="1">Mitochondrion outer membrane</location>
        <topology evidence="1">Multi-pass membrane protein</topology>
    </subcellularLocation>
    <text evidence="1">The ERMES/MDM complex localizes to a few discrete foci (around 10 per single cell), that represent mitochondria-endoplasmic reticulum junctions. These foci are often found next to mtDNA nucleoids.</text>
</comment>
<comment type="domain">
    <text evidence="1">Lacks alpha-helical transmembrane segments, suggesting that it resides in the membrane via beta-sheet conformations similar to those predicted for other outer membrane proteins and porin.</text>
</comment>
<comment type="domain">
    <text evidence="1">The SMP-LTD domain is a barrel-like domain that can bind various types of glycerophospholipids in its interior and mediate their transfer between two adjacent bilayers.</text>
</comment>
<comment type="similarity">
    <text evidence="1">Belongs to the MDM34 family.</text>
</comment>
<dbReference type="EMBL" id="CH408159">
    <property type="protein sequence ID" value="EDK40057.2"/>
    <property type="molecule type" value="Genomic_DNA"/>
</dbReference>
<dbReference type="RefSeq" id="XP_001483426.1">
    <property type="nucleotide sequence ID" value="XM_001483376.1"/>
</dbReference>
<dbReference type="SMR" id="A5DLK4"/>
<dbReference type="FunCoup" id="A5DLK4">
    <property type="interactions" value="65"/>
</dbReference>
<dbReference type="STRING" id="294746.A5DLK4"/>
<dbReference type="GeneID" id="5125343"/>
<dbReference type="KEGG" id="pgu:PGUG_04155"/>
<dbReference type="VEuPathDB" id="FungiDB:PGUG_04155"/>
<dbReference type="eggNOG" id="ENOG502QT3W">
    <property type="taxonomic scope" value="Eukaryota"/>
</dbReference>
<dbReference type="HOGENOM" id="CLU_476594_0_0_1"/>
<dbReference type="InParanoid" id="A5DLK4"/>
<dbReference type="OMA" id="PGCLERQ"/>
<dbReference type="OrthoDB" id="17927at2759"/>
<dbReference type="Proteomes" id="UP000001997">
    <property type="component" value="Unassembled WGS sequence"/>
</dbReference>
<dbReference type="GO" id="GO:0032865">
    <property type="term" value="C:ERMES complex"/>
    <property type="evidence" value="ECO:0007669"/>
    <property type="project" value="UniProtKB-UniRule"/>
</dbReference>
<dbReference type="GO" id="GO:0008289">
    <property type="term" value="F:lipid binding"/>
    <property type="evidence" value="ECO:0007669"/>
    <property type="project" value="UniProtKB-KW"/>
</dbReference>
<dbReference type="GO" id="GO:0000002">
    <property type="term" value="P:mitochondrial genome maintenance"/>
    <property type="evidence" value="ECO:0007669"/>
    <property type="project" value="UniProtKB-UniRule"/>
</dbReference>
<dbReference type="GO" id="GO:1990456">
    <property type="term" value="P:mitochondrion-endoplasmic reticulum membrane tethering"/>
    <property type="evidence" value="ECO:0007669"/>
    <property type="project" value="TreeGrafter"/>
</dbReference>
<dbReference type="GO" id="GO:0015914">
    <property type="term" value="P:phospholipid transport"/>
    <property type="evidence" value="ECO:0007669"/>
    <property type="project" value="TreeGrafter"/>
</dbReference>
<dbReference type="CDD" id="cd21673">
    <property type="entry name" value="SMP_Mdm34"/>
    <property type="match status" value="1"/>
</dbReference>
<dbReference type="HAMAP" id="MF_03105">
    <property type="entry name" value="Mdm34"/>
    <property type="match status" value="1"/>
</dbReference>
<dbReference type="InterPro" id="IPR027536">
    <property type="entry name" value="Mdm34"/>
</dbReference>
<dbReference type="InterPro" id="IPR031468">
    <property type="entry name" value="SMP_LBD"/>
</dbReference>
<dbReference type="PANTHER" id="PTHR28185">
    <property type="entry name" value="MITOCHONDRIAL DISTRIBUTION AND MORPHOLOGY PROTEIN 34"/>
    <property type="match status" value="1"/>
</dbReference>
<dbReference type="PANTHER" id="PTHR28185:SF1">
    <property type="entry name" value="MITOCHONDRIAL DISTRIBUTION AND MORPHOLOGY PROTEIN 34"/>
    <property type="match status" value="1"/>
</dbReference>
<dbReference type="PROSITE" id="PS51847">
    <property type="entry name" value="SMP"/>
    <property type="match status" value="1"/>
</dbReference>
<gene>
    <name evidence="1" type="primary">MDM34</name>
    <name type="ORF">PGUG_04155</name>
</gene>
<evidence type="ECO:0000255" key="1">
    <source>
        <dbReference type="HAMAP-Rule" id="MF_03105"/>
    </source>
</evidence>
<evidence type="ECO:0000256" key="2">
    <source>
        <dbReference type="SAM" id="MobiDB-lite"/>
    </source>
</evidence>
<reference key="1">
    <citation type="journal article" date="2009" name="Nature">
        <title>Evolution of pathogenicity and sexual reproduction in eight Candida genomes.</title>
        <authorList>
            <person name="Butler G."/>
            <person name="Rasmussen M.D."/>
            <person name="Lin M.F."/>
            <person name="Santos M.A.S."/>
            <person name="Sakthikumar S."/>
            <person name="Munro C.A."/>
            <person name="Rheinbay E."/>
            <person name="Grabherr M."/>
            <person name="Forche A."/>
            <person name="Reedy J.L."/>
            <person name="Agrafioti I."/>
            <person name="Arnaud M.B."/>
            <person name="Bates S."/>
            <person name="Brown A.J.P."/>
            <person name="Brunke S."/>
            <person name="Costanzo M.C."/>
            <person name="Fitzpatrick D.A."/>
            <person name="de Groot P.W.J."/>
            <person name="Harris D."/>
            <person name="Hoyer L.L."/>
            <person name="Hube B."/>
            <person name="Klis F.M."/>
            <person name="Kodira C."/>
            <person name="Lennard N."/>
            <person name="Logue M.E."/>
            <person name="Martin R."/>
            <person name="Neiman A.M."/>
            <person name="Nikolaou E."/>
            <person name="Quail M.A."/>
            <person name="Quinn J."/>
            <person name="Santos M.C."/>
            <person name="Schmitzberger F.F."/>
            <person name="Sherlock G."/>
            <person name="Shah P."/>
            <person name="Silverstein K.A.T."/>
            <person name="Skrzypek M.S."/>
            <person name="Soll D."/>
            <person name="Staggs R."/>
            <person name="Stansfield I."/>
            <person name="Stumpf M.P.H."/>
            <person name="Sudbery P.E."/>
            <person name="Srikantha T."/>
            <person name="Zeng Q."/>
            <person name="Berman J."/>
            <person name="Berriman M."/>
            <person name="Heitman J."/>
            <person name="Gow N.A.R."/>
            <person name="Lorenz M.C."/>
            <person name="Birren B.W."/>
            <person name="Kellis M."/>
            <person name="Cuomo C.A."/>
        </authorList>
    </citation>
    <scope>NUCLEOTIDE SEQUENCE [LARGE SCALE GENOMIC DNA]</scope>
    <source>
        <strain>ATCC 6260 / CBS 566 / DSM 6381 / JCM 1539 / NBRC 10279 / NRRL Y-324</strain>
    </source>
</reference>
<keyword id="KW-0445">Lipid transport</keyword>
<keyword id="KW-0446">Lipid-binding</keyword>
<keyword id="KW-0472">Membrane</keyword>
<keyword id="KW-0496">Mitochondrion</keyword>
<keyword id="KW-1000">Mitochondrion outer membrane</keyword>
<keyword id="KW-1185">Reference proteome</keyword>
<keyword id="KW-0812">Transmembrane</keyword>
<keyword id="KW-1134">Transmembrane beta strand</keyword>
<keyword id="KW-0813">Transport</keyword>
<accession>A5DLK4</accession>
<feature type="chain" id="PRO_0000384357" description="Mitochondrial distribution and morphology protein 34">
    <location>
        <begin position="1"/>
        <end position="518"/>
    </location>
</feature>
<feature type="domain" description="SMP-LTD" evidence="1">
    <location>
        <begin position="1"/>
        <end position="198"/>
    </location>
</feature>
<feature type="region of interest" description="Disordered" evidence="2">
    <location>
        <begin position="335"/>
        <end position="369"/>
    </location>
</feature>
<feature type="region of interest" description="Disordered" evidence="2">
    <location>
        <begin position="491"/>
        <end position="518"/>
    </location>
</feature>
<feature type="compositionally biased region" description="Basic residues" evidence="2">
    <location>
        <begin position="336"/>
        <end position="350"/>
    </location>
</feature>
<feature type="compositionally biased region" description="Basic and acidic residues" evidence="2">
    <location>
        <begin position="492"/>
        <end position="506"/>
    </location>
</feature>